<proteinExistence type="inferred from homology"/>
<accession>C5D4V7</accession>
<dbReference type="EC" id="2.1.1.-"/>
<dbReference type="EMBL" id="CP001638">
    <property type="protein sequence ID" value="ACS25149.1"/>
    <property type="molecule type" value="Genomic_DNA"/>
</dbReference>
<dbReference type="SMR" id="C5D4V7"/>
<dbReference type="STRING" id="471223.GWCH70_2453"/>
<dbReference type="KEGG" id="gwc:GWCH70_2453"/>
<dbReference type="eggNOG" id="COG2226">
    <property type="taxonomic scope" value="Bacteria"/>
</dbReference>
<dbReference type="HOGENOM" id="CLU_069129_5_2_9"/>
<dbReference type="OrthoDB" id="9811589at2"/>
<dbReference type="GO" id="GO:0008168">
    <property type="term" value="F:methyltransferase activity"/>
    <property type="evidence" value="ECO:0007669"/>
    <property type="project" value="UniProtKB-KW"/>
</dbReference>
<dbReference type="GO" id="GO:0032259">
    <property type="term" value="P:methylation"/>
    <property type="evidence" value="ECO:0007669"/>
    <property type="project" value="UniProtKB-KW"/>
</dbReference>
<dbReference type="CDD" id="cd02440">
    <property type="entry name" value="AdoMet_MTases"/>
    <property type="match status" value="1"/>
</dbReference>
<dbReference type="Gene3D" id="2.20.25.110">
    <property type="entry name" value="S-adenosyl-L-methionine-dependent methyltransferases"/>
    <property type="match status" value="1"/>
</dbReference>
<dbReference type="Gene3D" id="3.40.50.150">
    <property type="entry name" value="Vaccinia Virus protein VP39"/>
    <property type="match status" value="1"/>
</dbReference>
<dbReference type="InterPro" id="IPR041698">
    <property type="entry name" value="Methyltransf_25"/>
</dbReference>
<dbReference type="InterPro" id="IPR029063">
    <property type="entry name" value="SAM-dependent_MTases_sf"/>
</dbReference>
<dbReference type="PANTHER" id="PTHR43861:SF1">
    <property type="entry name" value="TRANS-ACONITATE 2-METHYLTRANSFERASE"/>
    <property type="match status" value="1"/>
</dbReference>
<dbReference type="PANTHER" id="PTHR43861">
    <property type="entry name" value="TRANS-ACONITATE 2-METHYLTRANSFERASE-RELATED"/>
    <property type="match status" value="1"/>
</dbReference>
<dbReference type="Pfam" id="PF13649">
    <property type="entry name" value="Methyltransf_25"/>
    <property type="match status" value="1"/>
</dbReference>
<dbReference type="SUPFAM" id="SSF53335">
    <property type="entry name" value="S-adenosyl-L-methionine-dependent methyltransferases"/>
    <property type="match status" value="1"/>
</dbReference>
<gene>
    <name type="ordered locus">GWCH70_2453</name>
</gene>
<sequence length="247" mass="28734">MTYESFAYWYDKLMNEAPYDAWQSFVQKKLKQYGRQGAKRILDVGCGTGELAVRLAKEGFLVTGVDLSENMLAIAQAKAEAQQVTIEFFQQNMTELEGFSSFDCVTIFCDSLNYLLEESEVRQTFSRIYELLKEDGLLLFDVHSTYKMDHIFQDAIFTSNDEEISYIWSCYPLSLPHSVEHELTFFVRGDDGKYERHDELHRQCTYEIDQYKQWLTEAGFTVLEITADFTDEAPSETSERVFFVAKK</sequence>
<name>Y2453_GEOSW</name>
<feature type="chain" id="PRO_0000394969" description="Putative methyltransferase GWCH70_2453">
    <location>
        <begin position="1"/>
        <end position="247"/>
    </location>
</feature>
<comment type="function">
    <text>May be a S-adenosyl-L-methionine (SAM)-dependent methyltransferase.</text>
</comment>
<comment type="similarity">
    <text evidence="1">Belongs to the methyltransferase superfamily.</text>
</comment>
<reference key="1">
    <citation type="submission" date="2009-06" db="EMBL/GenBank/DDBJ databases">
        <title>Complete sequence of chromosome of Geopacillus sp. WCH70.</title>
        <authorList>
            <consortium name="US DOE Joint Genome Institute"/>
            <person name="Lucas S."/>
            <person name="Copeland A."/>
            <person name="Lapidus A."/>
            <person name="Glavina del Rio T."/>
            <person name="Dalin E."/>
            <person name="Tice H."/>
            <person name="Bruce D."/>
            <person name="Goodwin L."/>
            <person name="Pitluck S."/>
            <person name="Chertkov O."/>
            <person name="Brettin T."/>
            <person name="Detter J.C."/>
            <person name="Han C."/>
            <person name="Larimer F."/>
            <person name="Land M."/>
            <person name="Hauser L."/>
            <person name="Kyrpides N."/>
            <person name="Mikhailova N."/>
            <person name="Brumm P."/>
            <person name="Mead D.A."/>
            <person name="Richardson P."/>
        </authorList>
    </citation>
    <scope>NUCLEOTIDE SEQUENCE [LARGE SCALE GENOMIC DNA]</scope>
    <source>
        <strain>WCH70</strain>
    </source>
</reference>
<organism>
    <name type="scientific">Geobacillus sp. (strain WCH70)</name>
    <dbReference type="NCBI Taxonomy" id="471223"/>
    <lineage>
        <taxon>Bacteria</taxon>
        <taxon>Bacillati</taxon>
        <taxon>Bacillota</taxon>
        <taxon>Bacilli</taxon>
        <taxon>Bacillales</taxon>
        <taxon>Anoxybacillaceae</taxon>
        <taxon>Geobacillus</taxon>
    </lineage>
</organism>
<protein>
    <recommendedName>
        <fullName>Putative methyltransferase GWCH70_2453</fullName>
        <ecNumber>2.1.1.-</ecNumber>
    </recommendedName>
</protein>
<evidence type="ECO:0000305" key="1"/>
<keyword id="KW-0489">Methyltransferase</keyword>
<keyword id="KW-0949">S-adenosyl-L-methionine</keyword>
<keyword id="KW-0808">Transferase</keyword>